<protein>
    <recommendedName>
        <fullName evidence="1">Uridylate kinase</fullName>
        <shortName evidence="1">UK</shortName>
        <ecNumber evidence="1">2.7.4.22</ecNumber>
    </recommendedName>
    <alternativeName>
        <fullName evidence="1">Uridine monophosphate kinase</fullName>
        <shortName evidence="1">UMP kinase</shortName>
        <shortName evidence="1">UMPK</shortName>
    </alternativeName>
</protein>
<name>PYRH_ECOUT</name>
<evidence type="ECO:0000255" key="1">
    <source>
        <dbReference type="HAMAP-Rule" id="MF_01220"/>
    </source>
</evidence>
<comment type="function">
    <text evidence="1">Catalyzes the reversible phosphorylation of UMP to UDP.</text>
</comment>
<comment type="catalytic activity">
    <reaction evidence="1">
        <text>UMP + ATP = UDP + ADP</text>
        <dbReference type="Rhea" id="RHEA:24400"/>
        <dbReference type="ChEBI" id="CHEBI:30616"/>
        <dbReference type="ChEBI" id="CHEBI:57865"/>
        <dbReference type="ChEBI" id="CHEBI:58223"/>
        <dbReference type="ChEBI" id="CHEBI:456216"/>
        <dbReference type="EC" id="2.7.4.22"/>
    </reaction>
</comment>
<comment type="activity regulation">
    <text evidence="1">Allosterically activated by GTP. Inhibited by UTP.</text>
</comment>
<comment type="pathway">
    <text evidence="1">Pyrimidine metabolism; CTP biosynthesis via de novo pathway; UDP from UMP (UMPK route): step 1/1.</text>
</comment>
<comment type="subunit">
    <text evidence="1">Homohexamer.</text>
</comment>
<comment type="subcellular location">
    <subcellularLocation>
        <location evidence="1">Cytoplasm</location>
    </subcellularLocation>
</comment>
<comment type="similarity">
    <text evidence="1">Belongs to the UMP kinase family.</text>
</comment>
<gene>
    <name evidence="1" type="primary">pyrH</name>
    <name type="ordered locus">UTI89_C0186</name>
</gene>
<proteinExistence type="inferred from homology"/>
<dbReference type="EC" id="2.7.4.22" evidence="1"/>
<dbReference type="EMBL" id="CP000243">
    <property type="protein sequence ID" value="ABE05696.1"/>
    <property type="molecule type" value="Genomic_DNA"/>
</dbReference>
<dbReference type="RefSeq" id="WP_000224573.1">
    <property type="nucleotide sequence ID" value="NZ_CP064825.1"/>
</dbReference>
<dbReference type="SMR" id="Q1RG18"/>
<dbReference type="GeneID" id="93777254"/>
<dbReference type="KEGG" id="eci:UTI89_C0186"/>
<dbReference type="HOGENOM" id="CLU_033861_0_0_6"/>
<dbReference type="UniPathway" id="UPA00159">
    <property type="reaction ID" value="UER00275"/>
</dbReference>
<dbReference type="Proteomes" id="UP000001952">
    <property type="component" value="Chromosome"/>
</dbReference>
<dbReference type="GO" id="GO:0005829">
    <property type="term" value="C:cytosol"/>
    <property type="evidence" value="ECO:0007669"/>
    <property type="project" value="TreeGrafter"/>
</dbReference>
<dbReference type="GO" id="GO:0005524">
    <property type="term" value="F:ATP binding"/>
    <property type="evidence" value="ECO:0007669"/>
    <property type="project" value="UniProtKB-KW"/>
</dbReference>
<dbReference type="GO" id="GO:0033862">
    <property type="term" value="F:UMP kinase activity"/>
    <property type="evidence" value="ECO:0007669"/>
    <property type="project" value="UniProtKB-EC"/>
</dbReference>
<dbReference type="GO" id="GO:0044210">
    <property type="term" value="P:'de novo' CTP biosynthetic process"/>
    <property type="evidence" value="ECO:0007669"/>
    <property type="project" value="UniProtKB-UniRule"/>
</dbReference>
<dbReference type="GO" id="GO:0006225">
    <property type="term" value="P:UDP biosynthetic process"/>
    <property type="evidence" value="ECO:0007669"/>
    <property type="project" value="TreeGrafter"/>
</dbReference>
<dbReference type="CDD" id="cd04254">
    <property type="entry name" value="AAK_UMPK-PyrH-Ec"/>
    <property type="match status" value="1"/>
</dbReference>
<dbReference type="FunFam" id="3.40.1160.10:FF:000001">
    <property type="entry name" value="Uridylate kinase"/>
    <property type="match status" value="1"/>
</dbReference>
<dbReference type="Gene3D" id="3.40.1160.10">
    <property type="entry name" value="Acetylglutamate kinase-like"/>
    <property type="match status" value="1"/>
</dbReference>
<dbReference type="HAMAP" id="MF_01220_B">
    <property type="entry name" value="PyrH_B"/>
    <property type="match status" value="1"/>
</dbReference>
<dbReference type="InterPro" id="IPR036393">
    <property type="entry name" value="AceGlu_kinase-like_sf"/>
</dbReference>
<dbReference type="InterPro" id="IPR001048">
    <property type="entry name" value="Asp/Glu/Uridylate_kinase"/>
</dbReference>
<dbReference type="InterPro" id="IPR011817">
    <property type="entry name" value="Uridylate_kinase"/>
</dbReference>
<dbReference type="InterPro" id="IPR015963">
    <property type="entry name" value="Uridylate_kinase_bac"/>
</dbReference>
<dbReference type="NCBIfam" id="TIGR02075">
    <property type="entry name" value="pyrH_bact"/>
    <property type="match status" value="1"/>
</dbReference>
<dbReference type="PANTHER" id="PTHR42833">
    <property type="entry name" value="URIDYLATE KINASE"/>
    <property type="match status" value="1"/>
</dbReference>
<dbReference type="PANTHER" id="PTHR42833:SF4">
    <property type="entry name" value="URIDYLATE KINASE PUMPKIN, CHLOROPLASTIC"/>
    <property type="match status" value="1"/>
</dbReference>
<dbReference type="Pfam" id="PF00696">
    <property type="entry name" value="AA_kinase"/>
    <property type="match status" value="1"/>
</dbReference>
<dbReference type="PIRSF" id="PIRSF005650">
    <property type="entry name" value="Uridylate_kin"/>
    <property type="match status" value="1"/>
</dbReference>
<dbReference type="SUPFAM" id="SSF53633">
    <property type="entry name" value="Carbamate kinase-like"/>
    <property type="match status" value="1"/>
</dbReference>
<organism>
    <name type="scientific">Escherichia coli (strain UTI89 / UPEC)</name>
    <dbReference type="NCBI Taxonomy" id="364106"/>
    <lineage>
        <taxon>Bacteria</taxon>
        <taxon>Pseudomonadati</taxon>
        <taxon>Pseudomonadota</taxon>
        <taxon>Gammaproteobacteria</taxon>
        <taxon>Enterobacterales</taxon>
        <taxon>Enterobacteriaceae</taxon>
        <taxon>Escherichia</taxon>
    </lineage>
</organism>
<feature type="chain" id="PRO_1000053923" description="Uridylate kinase">
    <location>
        <begin position="1"/>
        <end position="241"/>
    </location>
</feature>
<feature type="region of interest" description="Involved in allosteric activation by GTP" evidence="1">
    <location>
        <begin position="23"/>
        <end position="28"/>
    </location>
</feature>
<feature type="binding site" evidence="1">
    <location>
        <begin position="15"/>
        <end position="18"/>
    </location>
    <ligand>
        <name>ATP</name>
        <dbReference type="ChEBI" id="CHEBI:30616"/>
    </ligand>
</feature>
<feature type="binding site" evidence="1">
    <location>
        <position position="57"/>
    </location>
    <ligand>
        <name>UMP</name>
        <dbReference type="ChEBI" id="CHEBI:57865"/>
    </ligand>
</feature>
<feature type="binding site" evidence="1">
    <location>
        <position position="58"/>
    </location>
    <ligand>
        <name>ATP</name>
        <dbReference type="ChEBI" id="CHEBI:30616"/>
    </ligand>
</feature>
<feature type="binding site" evidence="1">
    <location>
        <position position="62"/>
    </location>
    <ligand>
        <name>ATP</name>
        <dbReference type="ChEBI" id="CHEBI:30616"/>
    </ligand>
</feature>
<feature type="binding site" evidence="1">
    <location>
        <position position="77"/>
    </location>
    <ligand>
        <name>UMP</name>
        <dbReference type="ChEBI" id="CHEBI:57865"/>
    </ligand>
</feature>
<feature type="binding site" evidence="1">
    <location>
        <begin position="138"/>
        <end position="145"/>
    </location>
    <ligand>
        <name>UMP</name>
        <dbReference type="ChEBI" id="CHEBI:57865"/>
    </ligand>
</feature>
<feature type="binding site" evidence="1">
    <location>
        <position position="165"/>
    </location>
    <ligand>
        <name>ATP</name>
        <dbReference type="ChEBI" id="CHEBI:30616"/>
    </ligand>
</feature>
<feature type="binding site" evidence="1">
    <location>
        <position position="171"/>
    </location>
    <ligand>
        <name>ATP</name>
        <dbReference type="ChEBI" id="CHEBI:30616"/>
    </ligand>
</feature>
<feature type="binding site" evidence="1">
    <location>
        <position position="174"/>
    </location>
    <ligand>
        <name>ATP</name>
        <dbReference type="ChEBI" id="CHEBI:30616"/>
    </ligand>
</feature>
<sequence>MATNAKPVYKRILLKLSGEALQGTEGFGIDASILDRMAQEIKELVELGIQVGVVIGGGNLFRGAGLAKAGMNRVVGDHMGMLATVMNGLAMRDALHRAYVNARLMSAIPLNGVCDSYSWAEAISLLRNNRVVILSAGTGNPFFTTDSAACLRGIEIEADVVLKATKVDGVFTADPAKDPTATMYEQLTYSEVLEKELKVMDLAAFTLARDHKLPIRVFNMNKPGALRRVVMGEKEGTLITE</sequence>
<accession>Q1RG18</accession>
<keyword id="KW-0021">Allosteric enzyme</keyword>
<keyword id="KW-0067">ATP-binding</keyword>
<keyword id="KW-0963">Cytoplasm</keyword>
<keyword id="KW-0418">Kinase</keyword>
<keyword id="KW-0547">Nucleotide-binding</keyword>
<keyword id="KW-0665">Pyrimidine biosynthesis</keyword>
<keyword id="KW-0808">Transferase</keyword>
<reference key="1">
    <citation type="journal article" date="2006" name="Proc. Natl. Acad. Sci. U.S.A.">
        <title>Identification of genes subject to positive selection in uropathogenic strains of Escherichia coli: a comparative genomics approach.</title>
        <authorList>
            <person name="Chen S.L."/>
            <person name="Hung C.-S."/>
            <person name="Xu J."/>
            <person name="Reigstad C.S."/>
            <person name="Magrini V."/>
            <person name="Sabo A."/>
            <person name="Blasiar D."/>
            <person name="Bieri T."/>
            <person name="Meyer R.R."/>
            <person name="Ozersky P."/>
            <person name="Armstrong J.R."/>
            <person name="Fulton R.S."/>
            <person name="Latreille J.P."/>
            <person name="Spieth J."/>
            <person name="Hooton T.M."/>
            <person name="Mardis E.R."/>
            <person name="Hultgren S.J."/>
            <person name="Gordon J.I."/>
        </authorList>
    </citation>
    <scope>NUCLEOTIDE SEQUENCE [LARGE SCALE GENOMIC DNA]</scope>
    <source>
        <strain>UTI89 / UPEC</strain>
    </source>
</reference>